<evidence type="ECO:0000255" key="1">
    <source>
        <dbReference type="HAMAP-Rule" id="MF_01039"/>
    </source>
</evidence>
<name>GPMA_SALHS</name>
<keyword id="KW-0312">Gluconeogenesis</keyword>
<keyword id="KW-0324">Glycolysis</keyword>
<keyword id="KW-0413">Isomerase</keyword>
<organism>
    <name type="scientific">Salmonella heidelberg (strain SL476)</name>
    <dbReference type="NCBI Taxonomy" id="454169"/>
    <lineage>
        <taxon>Bacteria</taxon>
        <taxon>Pseudomonadati</taxon>
        <taxon>Pseudomonadota</taxon>
        <taxon>Gammaproteobacteria</taxon>
        <taxon>Enterobacterales</taxon>
        <taxon>Enterobacteriaceae</taxon>
        <taxon>Salmonella</taxon>
    </lineage>
</organism>
<proteinExistence type="inferred from homology"/>
<comment type="function">
    <text evidence="1">Catalyzes the interconversion of 2-phosphoglycerate and 3-phosphoglycerate.</text>
</comment>
<comment type="catalytic activity">
    <reaction evidence="1">
        <text>(2R)-2-phosphoglycerate = (2R)-3-phosphoglycerate</text>
        <dbReference type="Rhea" id="RHEA:15901"/>
        <dbReference type="ChEBI" id="CHEBI:58272"/>
        <dbReference type="ChEBI" id="CHEBI:58289"/>
        <dbReference type="EC" id="5.4.2.11"/>
    </reaction>
</comment>
<comment type="pathway">
    <text evidence="1">Carbohydrate degradation; glycolysis; pyruvate from D-glyceraldehyde 3-phosphate: step 3/5.</text>
</comment>
<comment type="subunit">
    <text evidence="1">Homodimer.</text>
</comment>
<comment type="similarity">
    <text evidence="1">Belongs to the phosphoglycerate mutase family. BPG-dependent PGAM subfamily.</text>
</comment>
<dbReference type="EC" id="5.4.2.11" evidence="1"/>
<dbReference type="EMBL" id="CP001120">
    <property type="protein sequence ID" value="ACF67350.1"/>
    <property type="molecule type" value="Genomic_DNA"/>
</dbReference>
<dbReference type="RefSeq" id="WP_000301556.1">
    <property type="nucleotide sequence ID" value="NC_011083.1"/>
</dbReference>
<dbReference type="SMR" id="B4TC26"/>
<dbReference type="KEGG" id="seh:SeHA_C0899"/>
<dbReference type="HOGENOM" id="CLU_033323_1_1_6"/>
<dbReference type="UniPathway" id="UPA00109">
    <property type="reaction ID" value="UER00186"/>
</dbReference>
<dbReference type="Proteomes" id="UP000001866">
    <property type="component" value="Chromosome"/>
</dbReference>
<dbReference type="GO" id="GO:0004619">
    <property type="term" value="F:phosphoglycerate mutase activity"/>
    <property type="evidence" value="ECO:0007669"/>
    <property type="project" value="UniProtKB-EC"/>
</dbReference>
<dbReference type="GO" id="GO:0006094">
    <property type="term" value="P:gluconeogenesis"/>
    <property type="evidence" value="ECO:0007669"/>
    <property type="project" value="UniProtKB-UniRule"/>
</dbReference>
<dbReference type="GO" id="GO:0006096">
    <property type="term" value="P:glycolytic process"/>
    <property type="evidence" value="ECO:0007669"/>
    <property type="project" value="UniProtKB-UniRule"/>
</dbReference>
<dbReference type="CDD" id="cd07067">
    <property type="entry name" value="HP_PGM_like"/>
    <property type="match status" value="1"/>
</dbReference>
<dbReference type="FunFam" id="3.40.50.1240:FF:000003">
    <property type="entry name" value="2,3-bisphosphoglycerate-dependent phosphoglycerate mutase"/>
    <property type="match status" value="1"/>
</dbReference>
<dbReference type="Gene3D" id="3.40.50.1240">
    <property type="entry name" value="Phosphoglycerate mutase-like"/>
    <property type="match status" value="1"/>
</dbReference>
<dbReference type="HAMAP" id="MF_01039">
    <property type="entry name" value="PGAM_GpmA"/>
    <property type="match status" value="1"/>
</dbReference>
<dbReference type="InterPro" id="IPR013078">
    <property type="entry name" value="His_Pase_superF_clade-1"/>
</dbReference>
<dbReference type="InterPro" id="IPR029033">
    <property type="entry name" value="His_PPase_superfam"/>
</dbReference>
<dbReference type="InterPro" id="IPR001345">
    <property type="entry name" value="PG/BPGM_mutase_AS"/>
</dbReference>
<dbReference type="InterPro" id="IPR005952">
    <property type="entry name" value="Phosphogly_mut1"/>
</dbReference>
<dbReference type="NCBIfam" id="TIGR01258">
    <property type="entry name" value="pgm_1"/>
    <property type="match status" value="1"/>
</dbReference>
<dbReference type="NCBIfam" id="NF010713">
    <property type="entry name" value="PRK14115.1"/>
    <property type="match status" value="1"/>
</dbReference>
<dbReference type="PANTHER" id="PTHR11931">
    <property type="entry name" value="PHOSPHOGLYCERATE MUTASE"/>
    <property type="match status" value="1"/>
</dbReference>
<dbReference type="Pfam" id="PF00300">
    <property type="entry name" value="His_Phos_1"/>
    <property type="match status" value="1"/>
</dbReference>
<dbReference type="PIRSF" id="PIRSF000709">
    <property type="entry name" value="6PFK_2-Ptase"/>
    <property type="match status" value="1"/>
</dbReference>
<dbReference type="SMART" id="SM00855">
    <property type="entry name" value="PGAM"/>
    <property type="match status" value="1"/>
</dbReference>
<dbReference type="SUPFAM" id="SSF53254">
    <property type="entry name" value="Phosphoglycerate mutase-like"/>
    <property type="match status" value="1"/>
</dbReference>
<dbReference type="PROSITE" id="PS00175">
    <property type="entry name" value="PG_MUTASE"/>
    <property type="match status" value="1"/>
</dbReference>
<gene>
    <name evidence="1" type="primary">gpmA</name>
    <name type="ordered locus">SeHA_C0899</name>
</gene>
<accession>B4TC26</accession>
<feature type="chain" id="PRO_1000135974" description="2,3-bisphosphoglycerate-dependent phosphoglycerate mutase">
    <location>
        <begin position="1"/>
        <end position="250"/>
    </location>
</feature>
<feature type="active site" description="Tele-phosphohistidine intermediate" evidence="1">
    <location>
        <position position="11"/>
    </location>
</feature>
<feature type="active site" description="Proton donor/acceptor" evidence="1">
    <location>
        <position position="89"/>
    </location>
</feature>
<feature type="binding site" evidence="1">
    <location>
        <begin position="10"/>
        <end position="17"/>
    </location>
    <ligand>
        <name>substrate</name>
    </ligand>
</feature>
<feature type="binding site" evidence="1">
    <location>
        <begin position="23"/>
        <end position="24"/>
    </location>
    <ligand>
        <name>substrate</name>
    </ligand>
</feature>
<feature type="binding site" evidence="1">
    <location>
        <position position="62"/>
    </location>
    <ligand>
        <name>substrate</name>
    </ligand>
</feature>
<feature type="binding site" evidence="1">
    <location>
        <begin position="89"/>
        <end position="92"/>
    </location>
    <ligand>
        <name>substrate</name>
    </ligand>
</feature>
<feature type="binding site" evidence="1">
    <location>
        <position position="100"/>
    </location>
    <ligand>
        <name>substrate</name>
    </ligand>
</feature>
<feature type="binding site" evidence="1">
    <location>
        <begin position="116"/>
        <end position="117"/>
    </location>
    <ligand>
        <name>substrate</name>
    </ligand>
</feature>
<feature type="binding site" evidence="1">
    <location>
        <begin position="185"/>
        <end position="186"/>
    </location>
    <ligand>
        <name>substrate</name>
    </ligand>
</feature>
<feature type="site" description="Transition state stabilizer" evidence="1">
    <location>
        <position position="184"/>
    </location>
</feature>
<protein>
    <recommendedName>
        <fullName evidence="1">2,3-bisphosphoglycerate-dependent phosphoglycerate mutase</fullName>
        <shortName evidence="1">BPG-dependent PGAM</shortName>
        <shortName evidence="1">PGAM</shortName>
        <shortName evidence="1">Phosphoglyceromutase</shortName>
        <shortName evidence="1">dPGM</shortName>
        <ecNumber evidence="1">5.4.2.11</ecNumber>
    </recommendedName>
</protein>
<sequence>MAVTKLVLVRHGESQWNKENRFTGWYDVDLSEKGVSEAKAAGKLLKEEGFSFDFAYTSVLKRAIHTLWNVLDELDQAWLPVEKSWKLNERHYGALQGLNKAETAEKYGDEQVKQWRRGFAVTPPELTKDDERYPGHDPRYAKLSEKELPLTESLALTIDRVIPYWNDTILPRMKSGERVIIAAHGNSLRALVKYLDNMSEDEILELNIPTGVPLVYEFDENFKPLKHYYLGNADEIAAKAAAVANQGKAK</sequence>
<reference key="1">
    <citation type="journal article" date="2011" name="J. Bacteriol.">
        <title>Comparative genomics of 28 Salmonella enterica isolates: evidence for CRISPR-mediated adaptive sublineage evolution.</title>
        <authorList>
            <person name="Fricke W.F."/>
            <person name="Mammel M.K."/>
            <person name="McDermott P.F."/>
            <person name="Tartera C."/>
            <person name="White D.G."/>
            <person name="Leclerc J.E."/>
            <person name="Ravel J."/>
            <person name="Cebula T.A."/>
        </authorList>
    </citation>
    <scope>NUCLEOTIDE SEQUENCE [LARGE SCALE GENOMIC DNA]</scope>
    <source>
        <strain>SL476</strain>
    </source>
</reference>